<proteinExistence type="inferred from homology"/>
<sequence>MSNKDTRVVVGMSGGVDSSVTAHILKEQGYDVIGIFMKNWDNTDENGYCTATEDYNDVIAVCNQIGIPYYAVNFEKEYWDKVFTYFLDEYKKGRTPNPDVMCNKEIKFKAFLEHALKLGADYVATGHYARVRRHEDGHVEMLRGVDNNKDQTYFLNQLSQSQLSRVMFPIGDIEKKEVRRIAEEQDLATAKKKDSTGICFIGERNFKEFLSQYLPAQSGEMRTLKGEKIGTHAGLMYYTIGQRHGLGIGGDGDPWFVVGKNLDDNILYVEQGFHHDALYSDYLIASDISFVNDVDLENGFECTAKFRYRQKDTKVFVKNENENAIRVIFNEPVRAITPGQSVVLYDGDVCLGGATIDDVYKESGQLSYVV</sequence>
<accession>Q49Y59</accession>
<keyword id="KW-0067">ATP-binding</keyword>
<keyword id="KW-0963">Cytoplasm</keyword>
<keyword id="KW-1015">Disulfide bond</keyword>
<keyword id="KW-0547">Nucleotide-binding</keyword>
<keyword id="KW-1185">Reference proteome</keyword>
<keyword id="KW-0694">RNA-binding</keyword>
<keyword id="KW-0808">Transferase</keyword>
<keyword id="KW-0819">tRNA processing</keyword>
<keyword id="KW-0820">tRNA-binding</keyword>
<dbReference type="EC" id="2.8.1.13" evidence="1"/>
<dbReference type="EMBL" id="AP008934">
    <property type="protein sequence ID" value="BAE18285.1"/>
    <property type="molecule type" value="Genomic_DNA"/>
</dbReference>
<dbReference type="RefSeq" id="WP_011302965.1">
    <property type="nucleotide sequence ID" value="NC_007350.1"/>
</dbReference>
<dbReference type="SMR" id="Q49Y59"/>
<dbReference type="GeneID" id="3617024"/>
<dbReference type="KEGG" id="ssp:SSP1140"/>
<dbReference type="PATRIC" id="fig|342451.11.peg.1139"/>
<dbReference type="eggNOG" id="COG0482">
    <property type="taxonomic scope" value="Bacteria"/>
</dbReference>
<dbReference type="HOGENOM" id="CLU_035188_1_0_9"/>
<dbReference type="OrthoDB" id="9800696at2"/>
<dbReference type="Proteomes" id="UP000006371">
    <property type="component" value="Chromosome"/>
</dbReference>
<dbReference type="GO" id="GO:0005737">
    <property type="term" value="C:cytoplasm"/>
    <property type="evidence" value="ECO:0007669"/>
    <property type="project" value="UniProtKB-SubCell"/>
</dbReference>
<dbReference type="GO" id="GO:0005524">
    <property type="term" value="F:ATP binding"/>
    <property type="evidence" value="ECO:0007669"/>
    <property type="project" value="UniProtKB-KW"/>
</dbReference>
<dbReference type="GO" id="GO:0000049">
    <property type="term" value="F:tRNA binding"/>
    <property type="evidence" value="ECO:0007669"/>
    <property type="project" value="UniProtKB-KW"/>
</dbReference>
<dbReference type="GO" id="GO:0103016">
    <property type="term" value="F:tRNA-uridine 2-sulfurtransferase activity"/>
    <property type="evidence" value="ECO:0007669"/>
    <property type="project" value="UniProtKB-EC"/>
</dbReference>
<dbReference type="GO" id="GO:0002143">
    <property type="term" value="P:tRNA wobble position uridine thiolation"/>
    <property type="evidence" value="ECO:0007669"/>
    <property type="project" value="TreeGrafter"/>
</dbReference>
<dbReference type="CDD" id="cd01998">
    <property type="entry name" value="MnmA_TRMU-like"/>
    <property type="match status" value="1"/>
</dbReference>
<dbReference type="FunFam" id="2.30.30.280:FF:000001">
    <property type="entry name" value="tRNA-specific 2-thiouridylase MnmA"/>
    <property type="match status" value="1"/>
</dbReference>
<dbReference type="FunFam" id="2.40.30.10:FF:000023">
    <property type="entry name" value="tRNA-specific 2-thiouridylase MnmA"/>
    <property type="match status" value="1"/>
</dbReference>
<dbReference type="FunFam" id="3.40.50.620:FF:000004">
    <property type="entry name" value="tRNA-specific 2-thiouridylase MnmA"/>
    <property type="match status" value="1"/>
</dbReference>
<dbReference type="Gene3D" id="2.30.30.280">
    <property type="entry name" value="Adenine nucleotide alpha hydrolases-like domains"/>
    <property type="match status" value="1"/>
</dbReference>
<dbReference type="Gene3D" id="3.40.50.620">
    <property type="entry name" value="HUPs"/>
    <property type="match status" value="1"/>
</dbReference>
<dbReference type="Gene3D" id="2.40.30.10">
    <property type="entry name" value="Translation factors"/>
    <property type="match status" value="1"/>
</dbReference>
<dbReference type="HAMAP" id="MF_00144">
    <property type="entry name" value="tRNA_thiouridyl_MnmA"/>
    <property type="match status" value="1"/>
</dbReference>
<dbReference type="InterPro" id="IPR004506">
    <property type="entry name" value="MnmA-like"/>
</dbReference>
<dbReference type="InterPro" id="IPR046885">
    <property type="entry name" value="MnmA-like_C"/>
</dbReference>
<dbReference type="InterPro" id="IPR046884">
    <property type="entry name" value="MnmA-like_central"/>
</dbReference>
<dbReference type="InterPro" id="IPR023382">
    <property type="entry name" value="MnmA-like_central_sf"/>
</dbReference>
<dbReference type="InterPro" id="IPR014729">
    <property type="entry name" value="Rossmann-like_a/b/a_fold"/>
</dbReference>
<dbReference type="NCBIfam" id="NF001138">
    <property type="entry name" value="PRK00143.1"/>
    <property type="match status" value="1"/>
</dbReference>
<dbReference type="NCBIfam" id="TIGR00420">
    <property type="entry name" value="trmU"/>
    <property type="match status" value="1"/>
</dbReference>
<dbReference type="PANTHER" id="PTHR11933:SF5">
    <property type="entry name" value="MITOCHONDRIAL TRNA-SPECIFIC 2-THIOURIDYLASE 1"/>
    <property type="match status" value="1"/>
</dbReference>
<dbReference type="PANTHER" id="PTHR11933">
    <property type="entry name" value="TRNA 5-METHYLAMINOMETHYL-2-THIOURIDYLATE -METHYLTRANSFERASE"/>
    <property type="match status" value="1"/>
</dbReference>
<dbReference type="Pfam" id="PF03054">
    <property type="entry name" value="tRNA_Me_trans"/>
    <property type="match status" value="1"/>
</dbReference>
<dbReference type="Pfam" id="PF20258">
    <property type="entry name" value="tRNA_Me_trans_C"/>
    <property type="match status" value="1"/>
</dbReference>
<dbReference type="Pfam" id="PF20259">
    <property type="entry name" value="tRNA_Me_trans_M"/>
    <property type="match status" value="1"/>
</dbReference>
<dbReference type="SUPFAM" id="SSF52402">
    <property type="entry name" value="Adenine nucleotide alpha hydrolases-like"/>
    <property type="match status" value="1"/>
</dbReference>
<organism>
    <name type="scientific">Staphylococcus saprophyticus subsp. saprophyticus (strain ATCC 15305 / DSM 20229 / NCIMB 8711 / NCTC 7292 / S-41)</name>
    <dbReference type="NCBI Taxonomy" id="342451"/>
    <lineage>
        <taxon>Bacteria</taxon>
        <taxon>Bacillati</taxon>
        <taxon>Bacillota</taxon>
        <taxon>Bacilli</taxon>
        <taxon>Bacillales</taxon>
        <taxon>Staphylococcaceae</taxon>
        <taxon>Staphylococcus</taxon>
    </lineage>
</organism>
<evidence type="ECO:0000255" key="1">
    <source>
        <dbReference type="HAMAP-Rule" id="MF_00144"/>
    </source>
</evidence>
<protein>
    <recommendedName>
        <fullName evidence="1">tRNA-specific 2-thiouridylase MnmA</fullName>
        <ecNumber evidence="1">2.8.1.13</ecNumber>
    </recommendedName>
</protein>
<gene>
    <name evidence="1" type="primary">mnmA</name>
    <name type="synonym">trmU</name>
    <name type="ordered locus">SSP1140</name>
</gene>
<feature type="chain" id="PRO_1000009583" description="tRNA-specific 2-thiouridylase MnmA">
    <location>
        <begin position="1"/>
        <end position="370"/>
    </location>
</feature>
<feature type="region of interest" description="Interaction with target base in tRNA" evidence="1">
    <location>
        <begin position="97"/>
        <end position="99"/>
    </location>
</feature>
<feature type="region of interest" description="Interaction with tRNA" evidence="1">
    <location>
        <begin position="149"/>
        <end position="151"/>
    </location>
</feature>
<feature type="region of interest" description="Interaction with tRNA" evidence="1">
    <location>
        <begin position="307"/>
        <end position="308"/>
    </location>
</feature>
<feature type="active site" description="Nucleophile" evidence="1">
    <location>
        <position position="102"/>
    </location>
</feature>
<feature type="active site" description="Cysteine persulfide intermediate" evidence="1">
    <location>
        <position position="199"/>
    </location>
</feature>
<feature type="binding site" evidence="1">
    <location>
        <begin position="11"/>
        <end position="18"/>
    </location>
    <ligand>
        <name>ATP</name>
        <dbReference type="ChEBI" id="CHEBI:30616"/>
    </ligand>
</feature>
<feature type="binding site" evidence="1">
    <location>
        <position position="37"/>
    </location>
    <ligand>
        <name>ATP</name>
        <dbReference type="ChEBI" id="CHEBI:30616"/>
    </ligand>
</feature>
<feature type="binding site" evidence="1">
    <location>
        <position position="126"/>
    </location>
    <ligand>
        <name>ATP</name>
        <dbReference type="ChEBI" id="CHEBI:30616"/>
    </ligand>
</feature>
<feature type="site" description="Interaction with tRNA" evidence="1">
    <location>
        <position position="127"/>
    </location>
</feature>
<feature type="site" description="Interaction with tRNA" evidence="1">
    <location>
        <position position="340"/>
    </location>
</feature>
<feature type="disulfide bond" description="Alternate" evidence="1">
    <location>
        <begin position="102"/>
        <end position="199"/>
    </location>
</feature>
<comment type="function">
    <text evidence="1">Catalyzes the 2-thiolation of uridine at the wobble position (U34) of tRNA, leading to the formation of s(2)U34.</text>
</comment>
<comment type="catalytic activity">
    <reaction evidence="1">
        <text>S-sulfanyl-L-cysteinyl-[protein] + uridine(34) in tRNA + AH2 + ATP = 2-thiouridine(34) in tRNA + L-cysteinyl-[protein] + A + AMP + diphosphate + H(+)</text>
        <dbReference type="Rhea" id="RHEA:47032"/>
        <dbReference type="Rhea" id="RHEA-COMP:10131"/>
        <dbReference type="Rhea" id="RHEA-COMP:11726"/>
        <dbReference type="Rhea" id="RHEA-COMP:11727"/>
        <dbReference type="Rhea" id="RHEA-COMP:11728"/>
        <dbReference type="ChEBI" id="CHEBI:13193"/>
        <dbReference type="ChEBI" id="CHEBI:15378"/>
        <dbReference type="ChEBI" id="CHEBI:17499"/>
        <dbReference type="ChEBI" id="CHEBI:29950"/>
        <dbReference type="ChEBI" id="CHEBI:30616"/>
        <dbReference type="ChEBI" id="CHEBI:33019"/>
        <dbReference type="ChEBI" id="CHEBI:61963"/>
        <dbReference type="ChEBI" id="CHEBI:65315"/>
        <dbReference type="ChEBI" id="CHEBI:87170"/>
        <dbReference type="ChEBI" id="CHEBI:456215"/>
        <dbReference type="EC" id="2.8.1.13"/>
    </reaction>
</comment>
<comment type="subcellular location">
    <subcellularLocation>
        <location evidence="1">Cytoplasm</location>
    </subcellularLocation>
</comment>
<comment type="similarity">
    <text evidence="1">Belongs to the MnmA/TRMU family.</text>
</comment>
<name>MNMA_STAS1</name>
<reference key="1">
    <citation type="journal article" date="2005" name="Proc. Natl. Acad. Sci. U.S.A.">
        <title>Whole genome sequence of Staphylococcus saprophyticus reveals the pathogenesis of uncomplicated urinary tract infection.</title>
        <authorList>
            <person name="Kuroda M."/>
            <person name="Yamashita A."/>
            <person name="Hirakawa H."/>
            <person name="Kumano M."/>
            <person name="Morikawa K."/>
            <person name="Higashide M."/>
            <person name="Maruyama A."/>
            <person name="Inose Y."/>
            <person name="Matoba K."/>
            <person name="Toh H."/>
            <person name="Kuhara S."/>
            <person name="Hattori M."/>
            <person name="Ohta T."/>
        </authorList>
    </citation>
    <scope>NUCLEOTIDE SEQUENCE [LARGE SCALE GENOMIC DNA]</scope>
    <source>
        <strain>ATCC 15305 / DSM 20229 / NCIMB 8711 / NCTC 7292 / S-41</strain>
    </source>
</reference>